<accession>B1AIN0</accession>
<protein>
    <recommendedName>
        <fullName evidence="1">Large ribosomal subunit protein uL14</fullName>
    </recommendedName>
    <alternativeName>
        <fullName evidence="2">50S ribosomal protein L14</fullName>
    </alternativeName>
</protein>
<reference key="1">
    <citation type="submission" date="2008-02" db="EMBL/GenBank/DDBJ databases">
        <title>Genome sequence of Ureaplasma parvum serovar 3.</title>
        <authorList>
            <person name="Methe B.A."/>
            <person name="Glass J."/>
            <person name="Waites K."/>
            <person name="Shrivastava S."/>
        </authorList>
    </citation>
    <scope>NUCLEOTIDE SEQUENCE [LARGE SCALE GENOMIC DNA]</scope>
    <source>
        <strain>ATCC 27815 / 27 / NCTC 11736</strain>
    </source>
</reference>
<evidence type="ECO:0000255" key="1">
    <source>
        <dbReference type="HAMAP-Rule" id="MF_01367"/>
    </source>
</evidence>
<evidence type="ECO:0000305" key="2"/>
<proteinExistence type="inferred from homology"/>
<gene>
    <name evidence="1" type="primary">rplN</name>
    <name type="ordered locus">UPA3_0249</name>
</gene>
<keyword id="KW-0687">Ribonucleoprotein</keyword>
<keyword id="KW-0689">Ribosomal protein</keyword>
<keyword id="KW-0694">RNA-binding</keyword>
<keyword id="KW-0699">rRNA-binding</keyword>
<comment type="function">
    <text evidence="1">Binds to 23S rRNA. Forms part of two intersubunit bridges in the 70S ribosome.</text>
</comment>
<comment type="subunit">
    <text evidence="1">Part of the 50S ribosomal subunit. Forms a cluster with proteins L3 and L19. In the 70S ribosome, L14 and L19 interact and together make contacts with the 16S rRNA in bridges B5 and B8.</text>
</comment>
<comment type="similarity">
    <text evidence="1">Belongs to the universal ribosomal protein uL14 family.</text>
</comment>
<feature type="chain" id="PRO_1000087155" description="Large ribosomal subunit protein uL14">
    <location>
        <begin position="1"/>
        <end position="122"/>
    </location>
</feature>
<sequence>MIQHMTRLKVADNTGAKEVGVIKVLGGSKKRYASVGDIVVVSVKKATPAGLIAKGQMAKAVIVRTKKSIRRESGLLIRFDENACVLIKEDKTPRGSRIFGPVAREIRDRGYTKIASLAPEVL</sequence>
<dbReference type="EMBL" id="CP000942">
    <property type="protein sequence ID" value="ACA32912.1"/>
    <property type="molecule type" value="Genomic_DNA"/>
</dbReference>
<dbReference type="RefSeq" id="WP_004026223.1">
    <property type="nucleotide sequence ID" value="NC_010503.1"/>
</dbReference>
<dbReference type="SMR" id="B1AIN0"/>
<dbReference type="GeneID" id="93848716"/>
<dbReference type="KEGG" id="upa:UPA3_0249"/>
<dbReference type="HOGENOM" id="CLU_095071_2_1_14"/>
<dbReference type="Proteomes" id="UP000002162">
    <property type="component" value="Chromosome"/>
</dbReference>
<dbReference type="GO" id="GO:0022625">
    <property type="term" value="C:cytosolic large ribosomal subunit"/>
    <property type="evidence" value="ECO:0007669"/>
    <property type="project" value="TreeGrafter"/>
</dbReference>
<dbReference type="GO" id="GO:0070180">
    <property type="term" value="F:large ribosomal subunit rRNA binding"/>
    <property type="evidence" value="ECO:0007669"/>
    <property type="project" value="TreeGrafter"/>
</dbReference>
<dbReference type="GO" id="GO:0003735">
    <property type="term" value="F:structural constituent of ribosome"/>
    <property type="evidence" value="ECO:0007669"/>
    <property type="project" value="InterPro"/>
</dbReference>
<dbReference type="GO" id="GO:0006412">
    <property type="term" value="P:translation"/>
    <property type="evidence" value="ECO:0007669"/>
    <property type="project" value="UniProtKB-UniRule"/>
</dbReference>
<dbReference type="CDD" id="cd00337">
    <property type="entry name" value="Ribosomal_uL14"/>
    <property type="match status" value="1"/>
</dbReference>
<dbReference type="FunFam" id="2.40.150.20:FF:000001">
    <property type="entry name" value="50S ribosomal protein L14"/>
    <property type="match status" value="1"/>
</dbReference>
<dbReference type="Gene3D" id="2.40.150.20">
    <property type="entry name" value="Ribosomal protein L14"/>
    <property type="match status" value="1"/>
</dbReference>
<dbReference type="HAMAP" id="MF_01367">
    <property type="entry name" value="Ribosomal_uL14"/>
    <property type="match status" value="1"/>
</dbReference>
<dbReference type="InterPro" id="IPR000218">
    <property type="entry name" value="Ribosomal_uL14"/>
</dbReference>
<dbReference type="InterPro" id="IPR005745">
    <property type="entry name" value="Ribosomal_uL14_bac-type"/>
</dbReference>
<dbReference type="InterPro" id="IPR019972">
    <property type="entry name" value="Ribosomal_uL14_CS"/>
</dbReference>
<dbReference type="InterPro" id="IPR036853">
    <property type="entry name" value="Ribosomal_uL14_sf"/>
</dbReference>
<dbReference type="NCBIfam" id="TIGR01067">
    <property type="entry name" value="rplN_bact"/>
    <property type="match status" value="1"/>
</dbReference>
<dbReference type="PANTHER" id="PTHR11761">
    <property type="entry name" value="50S/60S RIBOSOMAL PROTEIN L14/L23"/>
    <property type="match status" value="1"/>
</dbReference>
<dbReference type="PANTHER" id="PTHR11761:SF3">
    <property type="entry name" value="LARGE RIBOSOMAL SUBUNIT PROTEIN UL14M"/>
    <property type="match status" value="1"/>
</dbReference>
<dbReference type="Pfam" id="PF00238">
    <property type="entry name" value="Ribosomal_L14"/>
    <property type="match status" value="1"/>
</dbReference>
<dbReference type="SMART" id="SM01374">
    <property type="entry name" value="Ribosomal_L14"/>
    <property type="match status" value="1"/>
</dbReference>
<dbReference type="SUPFAM" id="SSF50193">
    <property type="entry name" value="Ribosomal protein L14"/>
    <property type="match status" value="1"/>
</dbReference>
<dbReference type="PROSITE" id="PS00049">
    <property type="entry name" value="RIBOSOMAL_L14"/>
    <property type="match status" value="1"/>
</dbReference>
<organism>
    <name type="scientific">Ureaplasma parvum serovar 3 (strain ATCC 27815 / 27 / NCTC 11736)</name>
    <dbReference type="NCBI Taxonomy" id="505682"/>
    <lineage>
        <taxon>Bacteria</taxon>
        <taxon>Bacillati</taxon>
        <taxon>Mycoplasmatota</taxon>
        <taxon>Mycoplasmoidales</taxon>
        <taxon>Mycoplasmoidaceae</taxon>
        <taxon>Ureaplasma</taxon>
    </lineage>
</organism>
<name>RL14_UREP2</name>